<sequence>MSHRDTLFSAPIARLGDWTFDERVAEVFPDMIQRSVPGYSNIISMIGMLAERFVQPGTQVYDLGCSLGAATLSVRRNIHHDNCKIIAIDNSPAMIERCRHHIDAYKAPTPVDVIEGDIRDIAIENASMVVLNFTLQFLEPSERQALLDKIYQGLNPGGALVLSEKFSFEDAKVGELLFNMHHDFKRANGYSELEISQKRSMLENVMLTDSVETHKARLHQAGFEHSELWFQCFNFGSLVALKAEDAA</sequence>
<name>CMOA_ECO7I</name>
<feature type="chain" id="PRO_1000201352" description="Carboxy-S-adenosyl-L-methionine synthase">
    <location>
        <begin position="1"/>
        <end position="247"/>
    </location>
</feature>
<feature type="binding site" evidence="1">
    <location>
        <position position="39"/>
    </location>
    <ligand>
        <name>S-adenosyl-L-methionine</name>
        <dbReference type="ChEBI" id="CHEBI:59789"/>
    </ligand>
</feature>
<feature type="binding site" evidence="1">
    <location>
        <begin position="64"/>
        <end position="66"/>
    </location>
    <ligand>
        <name>S-adenosyl-L-methionine</name>
        <dbReference type="ChEBI" id="CHEBI:59789"/>
    </ligand>
</feature>
<feature type="binding site" evidence="1">
    <location>
        <begin position="89"/>
        <end position="90"/>
    </location>
    <ligand>
        <name>S-adenosyl-L-methionine</name>
        <dbReference type="ChEBI" id="CHEBI:59789"/>
    </ligand>
</feature>
<feature type="binding site" evidence="1">
    <location>
        <begin position="117"/>
        <end position="118"/>
    </location>
    <ligand>
        <name>S-adenosyl-L-methionine</name>
        <dbReference type="ChEBI" id="CHEBI:59789"/>
    </ligand>
</feature>
<feature type="binding site" evidence="1">
    <location>
        <position position="132"/>
    </location>
    <ligand>
        <name>S-adenosyl-L-methionine</name>
        <dbReference type="ChEBI" id="CHEBI:59789"/>
    </ligand>
</feature>
<feature type="binding site" evidence="1">
    <location>
        <position position="199"/>
    </location>
    <ligand>
        <name>S-adenosyl-L-methionine</name>
        <dbReference type="ChEBI" id="CHEBI:59789"/>
    </ligand>
</feature>
<organism>
    <name type="scientific">Escherichia coli O7:K1 (strain IAI39 / ExPEC)</name>
    <dbReference type="NCBI Taxonomy" id="585057"/>
    <lineage>
        <taxon>Bacteria</taxon>
        <taxon>Pseudomonadati</taxon>
        <taxon>Pseudomonadota</taxon>
        <taxon>Gammaproteobacteria</taxon>
        <taxon>Enterobacterales</taxon>
        <taxon>Enterobacteriaceae</taxon>
        <taxon>Escherichia</taxon>
    </lineage>
</organism>
<dbReference type="EC" id="2.1.3.-" evidence="1"/>
<dbReference type="EMBL" id="CU928164">
    <property type="protein sequence ID" value="CAR17313.1"/>
    <property type="molecule type" value="Genomic_DNA"/>
</dbReference>
<dbReference type="RefSeq" id="WP_000019583.1">
    <property type="nucleotide sequence ID" value="NC_011750.1"/>
</dbReference>
<dbReference type="RefSeq" id="YP_002407187.1">
    <property type="nucleotide sequence ID" value="NC_011750.1"/>
</dbReference>
<dbReference type="SMR" id="B7NS48"/>
<dbReference type="STRING" id="585057.ECIAI39_1179"/>
<dbReference type="KEGG" id="ect:ECIAI39_1179"/>
<dbReference type="PATRIC" id="fig|585057.6.peg.1236"/>
<dbReference type="HOGENOM" id="CLU_078475_0_0_6"/>
<dbReference type="Proteomes" id="UP000000749">
    <property type="component" value="Chromosome"/>
</dbReference>
<dbReference type="GO" id="GO:0016743">
    <property type="term" value="F:carboxyl- or carbamoyltransferase activity"/>
    <property type="evidence" value="ECO:0007669"/>
    <property type="project" value="UniProtKB-UniRule"/>
</dbReference>
<dbReference type="GO" id="GO:1904047">
    <property type="term" value="F:S-adenosyl-L-methionine binding"/>
    <property type="evidence" value="ECO:0007669"/>
    <property type="project" value="UniProtKB-UniRule"/>
</dbReference>
<dbReference type="GO" id="GO:0002098">
    <property type="term" value="P:tRNA wobble uridine modification"/>
    <property type="evidence" value="ECO:0007669"/>
    <property type="project" value="InterPro"/>
</dbReference>
<dbReference type="CDD" id="cd02440">
    <property type="entry name" value="AdoMet_MTases"/>
    <property type="match status" value="1"/>
</dbReference>
<dbReference type="FunFam" id="3.40.50.150:FF:000030">
    <property type="entry name" value="Carboxy-S-adenosyl-L-methionine synthase"/>
    <property type="match status" value="1"/>
</dbReference>
<dbReference type="Gene3D" id="3.40.50.150">
    <property type="entry name" value="Vaccinia Virus protein VP39"/>
    <property type="match status" value="1"/>
</dbReference>
<dbReference type="HAMAP" id="MF_01589">
    <property type="entry name" value="Cx_SAM_synthase"/>
    <property type="match status" value="1"/>
</dbReference>
<dbReference type="InterPro" id="IPR005271">
    <property type="entry name" value="CmoA"/>
</dbReference>
<dbReference type="InterPro" id="IPR041698">
    <property type="entry name" value="Methyltransf_25"/>
</dbReference>
<dbReference type="InterPro" id="IPR029063">
    <property type="entry name" value="SAM-dependent_MTases_sf"/>
</dbReference>
<dbReference type="NCBIfam" id="TIGR00740">
    <property type="entry name" value="carboxy-S-adenosyl-L-methionine synthase CmoA"/>
    <property type="match status" value="1"/>
</dbReference>
<dbReference type="NCBIfam" id="NF011995">
    <property type="entry name" value="PRK15451.1"/>
    <property type="match status" value="1"/>
</dbReference>
<dbReference type="PANTHER" id="PTHR43861:SF2">
    <property type="entry name" value="CARBOXY-S-ADENOSYL-L-METHIONINE SYNTHASE"/>
    <property type="match status" value="1"/>
</dbReference>
<dbReference type="PANTHER" id="PTHR43861">
    <property type="entry name" value="TRANS-ACONITATE 2-METHYLTRANSFERASE-RELATED"/>
    <property type="match status" value="1"/>
</dbReference>
<dbReference type="Pfam" id="PF13649">
    <property type="entry name" value="Methyltransf_25"/>
    <property type="match status" value="1"/>
</dbReference>
<dbReference type="PIRSF" id="PIRSF006325">
    <property type="entry name" value="MeTrfase_bac"/>
    <property type="match status" value="1"/>
</dbReference>
<dbReference type="SUPFAM" id="SSF53335">
    <property type="entry name" value="S-adenosyl-L-methionine-dependent methyltransferases"/>
    <property type="match status" value="1"/>
</dbReference>
<gene>
    <name evidence="1" type="primary">cmoA</name>
    <name type="ordered locus">ECIAI39_1179</name>
</gene>
<protein>
    <recommendedName>
        <fullName evidence="1">Carboxy-S-adenosyl-L-methionine synthase</fullName>
        <shortName evidence="1">Cx-SAM synthase</shortName>
        <ecNumber evidence="1">2.1.3.-</ecNumber>
    </recommendedName>
</protein>
<evidence type="ECO:0000255" key="1">
    <source>
        <dbReference type="HAMAP-Rule" id="MF_01589"/>
    </source>
</evidence>
<proteinExistence type="inferred from homology"/>
<accession>B7NS48</accession>
<reference key="1">
    <citation type="journal article" date="2009" name="PLoS Genet.">
        <title>Organised genome dynamics in the Escherichia coli species results in highly diverse adaptive paths.</title>
        <authorList>
            <person name="Touchon M."/>
            <person name="Hoede C."/>
            <person name="Tenaillon O."/>
            <person name="Barbe V."/>
            <person name="Baeriswyl S."/>
            <person name="Bidet P."/>
            <person name="Bingen E."/>
            <person name="Bonacorsi S."/>
            <person name="Bouchier C."/>
            <person name="Bouvet O."/>
            <person name="Calteau A."/>
            <person name="Chiapello H."/>
            <person name="Clermont O."/>
            <person name="Cruveiller S."/>
            <person name="Danchin A."/>
            <person name="Diard M."/>
            <person name="Dossat C."/>
            <person name="Karoui M.E."/>
            <person name="Frapy E."/>
            <person name="Garry L."/>
            <person name="Ghigo J.M."/>
            <person name="Gilles A.M."/>
            <person name="Johnson J."/>
            <person name="Le Bouguenec C."/>
            <person name="Lescat M."/>
            <person name="Mangenot S."/>
            <person name="Martinez-Jehanne V."/>
            <person name="Matic I."/>
            <person name="Nassif X."/>
            <person name="Oztas S."/>
            <person name="Petit M.A."/>
            <person name="Pichon C."/>
            <person name="Rouy Z."/>
            <person name="Ruf C.S."/>
            <person name="Schneider D."/>
            <person name="Tourret J."/>
            <person name="Vacherie B."/>
            <person name="Vallenet D."/>
            <person name="Medigue C."/>
            <person name="Rocha E.P.C."/>
            <person name="Denamur E."/>
        </authorList>
    </citation>
    <scope>NUCLEOTIDE SEQUENCE [LARGE SCALE GENOMIC DNA]</scope>
    <source>
        <strain>IAI39 / ExPEC</strain>
    </source>
</reference>
<keyword id="KW-0949">S-adenosyl-L-methionine</keyword>
<keyword id="KW-0808">Transferase</keyword>
<comment type="function">
    <text evidence="1">Catalyzes the conversion of S-adenosyl-L-methionine (SAM) to carboxy-S-adenosyl-L-methionine (Cx-SAM).</text>
</comment>
<comment type="catalytic activity">
    <reaction evidence="1">
        <text>prephenate + S-adenosyl-L-methionine = carboxy-S-adenosyl-L-methionine + 3-phenylpyruvate + H2O</text>
        <dbReference type="Rhea" id="RHEA:51692"/>
        <dbReference type="ChEBI" id="CHEBI:15377"/>
        <dbReference type="ChEBI" id="CHEBI:18005"/>
        <dbReference type="ChEBI" id="CHEBI:29934"/>
        <dbReference type="ChEBI" id="CHEBI:59789"/>
        <dbReference type="ChEBI" id="CHEBI:134278"/>
    </reaction>
</comment>
<comment type="subunit">
    <text evidence="1">Homodimer.</text>
</comment>
<comment type="similarity">
    <text evidence="1">Belongs to the class I-like SAM-binding methyltransferase superfamily. Cx-SAM synthase family.</text>
</comment>